<organism>
    <name type="scientific">Candida albicans (strain WO-1)</name>
    <name type="common">Yeast</name>
    <dbReference type="NCBI Taxonomy" id="294748"/>
    <lineage>
        <taxon>Eukaryota</taxon>
        <taxon>Fungi</taxon>
        <taxon>Dikarya</taxon>
        <taxon>Ascomycota</taxon>
        <taxon>Saccharomycotina</taxon>
        <taxon>Pichiomycetes</taxon>
        <taxon>Debaryomycetaceae</taxon>
        <taxon>Candida/Lodderomyces clade</taxon>
        <taxon>Candida</taxon>
    </lineage>
</organism>
<sequence>MAKRTLGLAKAAKAKKQKKEQEHQEISASPDEESSSSNQLTIELPEEIDANNEISQLKGLHKTYLQSERDNELLVNGIIHECDRLLRENDSENKQPLPAVFHAIYAIALAELSKFHTEELDKVKEFFIAALERVELGLEKNPNDINLLVAKTKILLDQISLQYIAPLTLESDVKELDKEIDELLDAALSVYESVEARAKELKDYSIFDDSETLDILEALDDILDIVDNFGKENQGDDGSDEDDDEDDDEEEKSVELAETHPLYKIKNSDKYDQWWRDHTHLYLDNLEKLENGSPELKREVCHRLGQSYLQESEVPYSVFTTLKYDDEYDGIEELEGLTEKEAQKISQELITKALDYLKQAKDEEDPETWVSIAEAMISLGNLYEVDSKEQEDLYLEAEKILKRANNVTNGKFQEELDNLLP</sequence>
<name>ETT1_CANAW</name>
<keyword id="KW-0539">Nucleus</keyword>
<keyword id="KW-0804">Transcription</keyword>
<keyword id="KW-0805">Transcription regulation</keyword>
<keyword id="KW-0810">Translation regulation</keyword>
<accession>C4YJP2</accession>
<dbReference type="EMBL" id="CH672350">
    <property type="protein sequence ID" value="EEQ45726.1"/>
    <property type="molecule type" value="Genomic_DNA"/>
</dbReference>
<dbReference type="SMR" id="C4YJP2"/>
<dbReference type="PaxDb" id="5476-C4YJP2"/>
<dbReference type="VEuPathDB" id="FungiDB:CAWG_04060"/>
<dbReference type="HOGENOM" id="CLU_050427_0_0_1"/>
<dbReference type="OMA" id="GIVHECD"/>
<dbReference type="OrthoDB" id="13771at766764"/>
<dbReference type="Proteomes" id="UP000001429">
    <property type="component" value="Chromosome 2, Supercontig 1.5"/>
</dbReference>
<dbReference type="GO" id="GO:0005634">
    <property type="term" value="C:nucleus"/>
    <property type="evidence" value="ECO:0007669"/>
    <property type="project" value="UniProtKB-SubCell"/>
</dbReference>
<dbReference type="GO" id="GO:2000640">
    <property type="term" value="P:positive regulation of SREBP signaling pathway"/>
    <property type="evidence" value="ECO:0007669"/>
    <property type="project" value="TreeGrafter"/>
</dbReference>
<dbReference type="GO" id="GO:0006417">
    <property type="term" value="P:regulation of translation"/>
    <property type="evidence" value="ECO:0007669"/>
    <property type="project" value="UniProtKB-KW"/>
</dbReference>
<dbReference type="InterPro" id="IPR024318">
    <property type="entry name" value="Nro1/ETT1"/>
</dbReference>
<dbReference type="PANTHER" id="PTHR28290">
    <property type="entry name" value="ENHANCER OF TRANSLATION TERMINATION 1"/>
    <property type="match status" value="1"/>
</dbReference>
<dbReference type="PANTHER" id="PTHR28290:SF1">
    <property type="entry name" value="ENHANCER OF TRANSLATION TERMINATION 1"/>
    <property type="match status" value="1"/>
</dbReference>
<dbReference type="Pfam" id="PF12753">
    <property type="entry name" value="Nro1"/>
    <property type="match status" value="1"/>
</dbReference>
<feature type="chain" id="PRO_0000406611" description="Enhancer of translation termination 1">
    <location>
        <begin position="1"/>
        <end position="421"/>
    </location>
</feature>
<feature type="region of interest" description="Disordered" evidence="2">
    <location>
        <begin position="1"/>
        <end position="41"/>
    </location>
</feature>
<feature type="region of interest" description="Disordered" evidence="2">
    <location>
        <begin position="230"/>
        <end position="259"/>
    </location>
</feature>
<feature type="compositionally biased region" description="Acidic residues" evidence="2">
    <location>
        <begin position="235"/>
        <end position="252"/>
    </location>
</feature>
<gene>
    <name type="primary">ETT1</name>
    <name type="ORF">CAWG_04060</name>
</gene>
<comment type="function">
    <text evidence="1">Required for correct translation termination and probably involved in regulation of hypoxic gene expression.</text>
</comment>
<comment type="subcellular location">
    <subcellularLocation>
        <location evidence="1">Nucleus</location>
    </subcellularLocation>
</comment>
<comment type="similarity">
    <text evidence="3">Belongs to the ETT1 family.</text>
</comment>
<evidence type="ECO:0000250" key="1"/>
<evidence type="ECO:0000256" key="2">
    <source>
        <dbReference type="SAM" id="MobiDB-lite"/>
    </source>
</evidence>
<evidence type="ECO:0000305" key="3"/>
<reference key="1">
    <citation type="journal article" date="2009" name="Nature">
        <title>Evolution of pathogenicity and sexual reproduction in eight Candida genomes.</title>
        <authorList>
            <person name="Butler G."/>
            <person name="Rasmussen M.D."/>
            <person name="Lin M.F."/>
            <person name="Santos M.A.S."/>
            <person name="Sakthikumar S."/>
            <person name="Munro C.A."/>
            <person name="Rheinbay E."/>
            <person name="Grabherr M."/>
            <person name="Forche A."/>
            <person name="Reedy J.L."/>
            <person name="Agrafioti I."/>
            <person name="Arnaud M.B."/>
            <person name="Bates S."/>
            <person name="Brown A.J.P."/>
            <person name="Brunke S."/>
            <person name="Costanzo M.C."/>
            <person name="Fitzpatrick D.A."/>
            <person name="de Groot P.W.J."/>
            <person name="Harris D."/>
            <person name="Hoyer L.L."/>
            <person name="Hube B."/>
            <person name="Klis F.M."/>
            <person name="Kodira C."/>
            <person name="Lennard N."/>
            <person name="Logue M.E."/>
            <person name="Martin R."/>
            <person name="Neiman A.M."/>
            <person name="Nikolaou E."/>
            <person name="Quail M.A."/>
            <person name="Quinn J."/>
            <person name="Santos M.C."/>
            <person name="Schmitzberger F.F."/>
            <person name="Sherlock G."/>
            <person name="Shah P."/>
            <person name="Silverstein K.A.T."/>
            <person name="Skrzypek M.S."/>
            <person name="Soll D."/>
            <person name="Staggs R."/>
            <person name="Stansfield I."/>
            <person name="Stumpf M.P.H."/>
            <person name="Sudbery P.E."/>
            <person name="Srikantha T."/>
            <person name="Zeng Q."/>
            <person name="Berman J."/>
            <person name="Berriman M."/>
            <person name="Heitman J."/>
            <person name="Gow N.A.R."/>
            <person name="Lorenz M.C."/>
            <person name="Birren B.W."/>
            <person name="Kellis M."/>
            <person name="Cuomo C.A."/>
        </authorList>
    </citation>
    <scope>NUCLEOTIDE SEQUENCE [LARGE SCALE GENOMIC DNA]</scope>
    <source>
        <strain>WO-1</strain>
    </source>
</reference>
<protein>
    <recommendedName>
        <fullName>Enhancer of translation termination 1</fullName>
    </recommendedName>
</protein>
<proteinExistence type="inferred from homology"/>